<dbReference type="EMBL" id="LOJG01068708">
    <property type="status" value="NOT_ANNOTATED_CDS"/>
    <property type="molecule type" value="Genomic_DNA"/>
</dbReference>
<dbReference type="SMR" id="P0DUX6"/>
<dbReference type="GO" id="GO:0042627">
    <property type="term" value="C:chylomicron"/>
    <property type="evidence" value="ECO:0007669"/>
    <property type="project" value="UniProtKB-KW"/>
</dbReference>
<dbReference type="GO" id="GO:0034364">
    <property type="term" value="C:high-density lipoprotein particle"/>
    <property type="evidence" value="ECO:0007669"/>
    <property type="project" value="UniProtKB-KW"/>
</dbReference>
<dbReference type="GO" id="GO:0034362">
    <property type="term" value="C:low-density lipoprotein particle"/>
    <property type="evidence" value="ECO:0007669"/>
    <property type="project" value="UniProtKB-KW"/>
</dbReference>
<dbReference type="GO" id="GO:0034361">
    <property type="term" value="C:very-low-density lipoprotein particle"/>
    <property type="evidence" value="ECO:0007669"/>
    <property type="project" value="UniProtKB-KW"/>
</dbReference>
<dbReference type="GO" id="GO:0016004">
    <property type="term" value="F:phospholipase activator activity"/>
    <property type="evidence" value="ECO:0007669"/>
    <property type="project" value="TreeGrafter"/>
</dbReference>
<dbReference type="GO" id="GO:0043274">
    <property type="term" value="F:phospholipase binding"/>
    <property type="evidence" value="ECO:0007669"/>
    <property type="project" value="TreeGrafter"/>
</dbReference>
<dbReference type="GO" id="GO:0016042">
    <property type="term" value="P:lipid catabolic process"/>
    <property type="evidence" value="ECO:0007669"/>
    <property type="project" value="UniProtKB-KW"/>
</dbReference>
<dbReference type="GO" id="GO:0006869">
    <property type="term" value="P:lipid transport"/>
    <property type="evidence" value="ECO:0007669"/>
    <property type="project" value="UniProtKB-KW"/>
</dbReference>
<dbReference type="GO" id="GO:0060697">
    <property type="term" value="P:positive regulation of phospholipid catabolic process"/>
    <property type="evidence" value="ECO:0007669"/>
    <property type="project" value="TreeGrafter"/>
</dbReference>
<dbReference type="FunFam" id="1.10.1440.10:FF:000001">
    <property type="entry name" value="Apolipoprotein C-II"/>
    <property type="match status" value="1"/>
</dbReference>
<dbReference type="Gene3D" id="1.10.1440.10">
    <property type="entry name" value="Apolipoprotein C-II"/>
    <property type="match status" value="1"/>
</dbReference>
<dbReference type="InterPro" id="IPR008019">
    <property type="entry name" value="Apo-CII"/>
</dbReference>
<dbReference type="InterPro" id="IPR023121">
    <property type="entry name" value="ApoC-II_dom_sf"/>
</dbReference>
<dbReference type="PANTHER" id="PTHR16566">
    <property type="entry name" value="APOLIPOPROTEIN C-II"/>
    <property type="match status" value="1"/>
</dbReference>
<dbReference type="PANTHER" id="PTHR16566:SF0">
    <property type="entry name" value="APOLIPOPROTEIN C-II"/>
    <property type="match status" value="1"/>
</dbReference>
<dbReference type="Pfam" id="PF05355">
    <property type="entry name" value="Apo-CII"/>
    <property type="match status" value="1"/>
</dbReference>
<sequence>MGSRFLLALFLVLLVLGCEVQAAQQLQQDDPGSPALLDKVQESISSYWDTAKAAAQGLYQKTYLTSVDEKLRDMYSKSSAAMTTYASIFTDQIFTLLKGE</sequence>
<comment type="function">
    <text evidence="1">Component of chylomicrons, very low-density lipoproteins (VLDL), low-density lipoproteins (LDL), and high-density lipoproteins (HDL) in plasma. Plays an important role in lipoprotein metabolism as an activator of lipoprotein lipase.</text>
</comment>
<comment type="subcellular location">
    <subcellularLocation>
        <location evidence="1">Secreted</location>
    </subcellularLocation>
</comment>
<comment type="PTM">
    <text evidence="1">Proapolipoprotein C-II is synthesized as a sialic acid containing glycoprotein which is subsequently desialylated prior to its proteolytic processing.</text>
</comment>
<comment type="PTM">
    <text evidence="1">Proapolipoprotein C-II, the major form found in plasma undergoes proteolytic cleavage of its N-terminal hexapeptide to generate the mature form apolipoprotein C-II, which occurs as the minor form in plasma.</text>
</comment>
<comment type="similarity">
    <text evidence="3">Belongs to the apolipoprotein C2 family.</text>
</comment>
<feature type="signal peptide" evidence="2">
    <location>
        <begin position="1"/>
        <end position="22"/>
    </location>
</feature>
<feature type="chain" id="PRO_0000453992" description="Proapolipoprotein C-II">
    <location>
        <begin position="23"/>
        <end position="100"/>
    </location>
</feature>
<feature type="chain" id="PRO_0000453993" description="Apolipoprotein C-II" evidence="1">
    <location>
        <begin position="29"/>
        <end position="100"/>
    </location>
</feature>
<feature type="region of interest" description="Lipid binding" evidence="1">
    <location>
        <begin position="66"/>
        <end position="74"/>
    </location>
</feature>
<feature type="region of interest" description="Lipoprotein lipase cofactor" evidence="1">
    <location>
        <begin position="78"/>
        <end position="100"/>
    </location>
</feature>
<proteinExistence type="inferred from homology"/>
<keyword id="KW-0162">Chylomicron</keyword>
<keyword id="KW-0345">HDL</keyword>
<keyword id="KW-0427">LDL</keyword>
<keyword id="KW-0442">Lipid degradation</keyword>
<keyword id="KW-0443">Lipid metabolism</keyword>
<keyword id="KW-0445">Lipid transport</keyword>
<keyword id="KW-0964">Secreted</keyword>
<keyword id="KW-0732">Signal</keyword>
<keyword id="KW-0813">Transport</keyword>
<keyword id="KW-0850">VLDL</keyword>
<reference key="1">
    <citation type="journal article" date="2016" name="Genome Res.">
        <title>Genomes of Ellobius species provide insight into the evolutionary dynamics of mammalian sex chromosomes.</title>
        <authorList>
            <person name="Mulugeta E."/>
            <person name="Wassenaar E."/>
            <person name="Sleddens-Linkels E."/>
            <person name="Van Ijcken W.F."/>
            <person name="Heard E."/>
            <person name="Grootegoed J.A."/>
            <person name="Just W."/>
            <person name="Gribnau J."/>
            <person name="Baarends W.M."/>
        </authorList>
    </citation>
    <scope>NUCLEOTIDE SEQUENCE [LARGE SCALE GENOMIC DNA]</scope>
    <source>
        <tissue>Liver</tissue>
    </source>
</reference>
<accession>P0DUX6</accession>
<protein>
    <recommendedName>
        <fullName>Apolipoprotein C-II</fullName>
        <shortName>Apo-CII</shortName>
        <shortName>ApoC-II</shortName>
    </recommendedName>
    <alternativeName>
        <fullName>Apolipoprotein C2</fullName>
    </alternativeName>
    <component>
        <recommendedName>
            <fullName>Proapolipoprotein C-II</fullName>
            <shortName>ProapoC-II</shortName>
        </recommendedName>
    </component>
</protein>
<gene>
    <name type="primary">APOC2</name>
</gene>
<organism>
    <name type="scientific">Bramus lutescens</name>
    <name type="common">Transcaucasian mole vole</name>
    <name type="synonym">Ellobius lutescens</name>
    <dbReference type="NCBI Taxonomy" id="3370998"/>
    <lineage>
        <taxon>Eukaryota</taxon>
        <taxon>Metazoa</taxon>
        <taxon>Chordata</taxon>
        <taxon>Craniata</taxon>
        <taxon>Vertebrata</taxon>
        <taxon>Euteleostomi</taxon>
        <taxon>Mammalia</taxon>
        <taxon>Eutheria</taxon>
        <taxon>Euarchontoglires</taxon>
        <taxon>Glires</taxon>
        <taxon>Rodentia</taxon>
        <taxon>Myomorpha</taxon>
        <taxon>Muroidea</taxon>
        <taxon>Cricetidae</taxon>
        <taxon>Bramus</taxon>
    </lineage>
</organism>
<evidence type="ECO:0000250" key="1">
    <source>
        <dbReference type="UniProtKB" id="P02655"/>
    </source>
</evidence>
<evidence type="ECO:0000255" key="2"/>
<evidence type="ECO:0000305" key="3"/>
<name>APOC2_BRALU</name>